<name>IML1_PYRO7</name>
<sequence length="1874" mass="209930">MHRNARGNVPGPSSLRQSIGTTKADRDRDRVPSVDAGAPRTPDTTTSSSTTRHMHHQPHPRNGRQERKCTVTVNESFSRDEVLLNLDLFDNGIKPGSLMAIEVPPEKSGHASLRKMPTQDHLDRDDSSMDASQTGSTTTTDRRYLFIVKDMSKDMKLRHPKVELYVAKHVAEAFGMKKGGHVYLIPEDANNPSIEASHVELSFRDQYLSRADMWRMAVGELSERTVYQGQVIYFLGTCKAQISAVFVDGRKVRSAFFGRHTRPIYRSESARYILFIQMSREMWDFDSDGSGEIMFNKVVNGFLPALFKKWMALKLKHLVSIVLFARVEYDTGISTEFAETALHDSYFTGTQKSGSKRPYKDFYRVVVSEKTSVEWTSILYHLKREFGIFRRDISLHHQQALNPMQSVSEEGATKQPYHRQIRAESSLATHGNFLEAINLASTVYAHDYIDRDLMRTGISVVVISPGAGVFEVDYEELRRTTEALVGNGIGIDLICVPKIPLHSVPLFRYKKVPEKGRRHSEKIKTHFHDGSTPKYHTPAIGSYTSALGSSLSPTKNMSVPPRVESSLMSHASNDEWSYALPQWLHVSYWTGNSDEALSYQGIALSASDNTCQDSQDEFAIRCRMYDLQMRSVLETNEIETTPLHADPSFPRKLIQPLPLAKFRRFDVDGITLIPNLRHTGGLVDHVSGFQKFAPDKHAKPGEKTIWRHLQEYDDTKAHLPASRRHLGFRPQNNADNVRMHGVESGSYLGASMISERRVSINHHQSPHPSVSSKTSSGKTPKFMRQISLGQRGFGIAAPKVAVAEVQVENVAAATSMAAVSGSRSPLPVRMTPIKSNPQTSQSPQALTAIRDSPIAERAQESGRSSRLAPSRPIHIRNNVQSSDSTLFGTVGTMISSSVIRHAGAAPDAPEIKYSNALRAEDAQKVGISKLRAGEMPDQQAILSPSAAVSPWLTVLNPCNPEANKVDETNLYSRWQHVFPQPSEMKVMKWKSLCTPAAVPLTTEHFPTQAQFDSEYQRQPYNVSQEFDDELTEEPKTREELLKELISLRFSQGFQVVVGQAVAKAFGQKQMKIADILSRDHSAEDGTSIFLSVGNTIHQLSCVNGTEVEVNIFTRKPALQASNLEQPEVYKPAIRTIMDEDYVARQIDIATPKPERNWNYIDSYVAGHDLELSESFRFWRARFVLIPIVNRTSLDPAAGEKEEETRIEGTRRLGKLWQKHRYIPPSDRRFQDLGPRHRKDPNPLDIVYKTDDPSVVIAAELETLPLLEGLEAGHRRAQLVTNKHQFRKSSLNLAQLAEAIQQPVENGGVRMQNRRWHLRLHYNCFIGSDMIDWMLDNFEDLDSREEAEALGNVLMISDEDKLKDKEKDKDKEKDKDKEKEGSTRRESGIFVHVEKRHRFKDGQYFYQISSDFAKPQPSTWFNQRWREASVPSTPISEQPPRESIRNSISHTLSEEESLTSGATTPTAPILPYGGNKPRVMLSKVMKYDVDHRKRSYRPERIDLHYDRLHNPDNCYHLRIDWMNVTAKLIEDAVEGWAREASLYGMRLVEVPIAEACTISDVNPFRKPFPIKLAVPPPDRQPVTFYDPTSFSPLAQPARLFYQKAILRKFDFVLDMESASSFPSNVDVTYSWGKPEFKYTQYIHRSGILLAEITDEGDFLILANRLYSNRAQAARDKEMRKEEEQQQHKHRQGGAGAGGNGGLPGHSHVADLTPLSSPLFRAVNTTGSPKTAGQGAAGAGSHGNNIAPGGEHNVHSALIKFSLDEPNSIRLEMEKFCHDPVALEAFYSELLDRAPGPQPASSIMAPTIISQTGSGTGPVADHNIPSFPSGGLPQGLLSSSVAGDGLSVIPSPVQQRVQSPAVLAASQLLRRGSVQY</sequence>
<evidence type="ECO:0000250" key="1"/>
<evidence type="ECO:0000255" key="2">
    <source>
        <dbReference type="PROSITE-ProRule" id="PRU00066"/>
    </source>
</evidence>
<evidence type="ECO:0000256" key="3">
    <source>
        <dbReference type="SAM" id="MobiDB-lite"/>
    </source>
</evidence>
<evidence type="ECO:0000305" key="4"/>
<accession>A4R596</accession>
<accession>G4NIP7</accession>
<keyword id="KW-0472">Membrane</keyword>
<keyword id="KW-1185">Reference proteome</keyword>
<keyword id="KW-0926">Vacuole</keyword>
<protein>
    <recommendedName>
        <fullName>Vacuolar membrane-associated protein IML1</fullName>
    </recommendedName>
</protein>
<gene>
    <name type="primary">IML1</name>
    <name type="ORF">MGG_04160</name>
</gene>
<dbReference type="EMBL" id="CM001236">
    <property type="protein sequence ID" value="EHA47303.1"/>
    <property type="molecule type" value="Genomic_DNA"/>
</dbReference>
<dbReference type="RefSeq" id="XP_003719670.1">
    <property type="nucleotide sequence ID" value="XM_003719622.1"/>
</dbReference>
<dbReference type="FunCoup" id="A4R596">
    <property type="interactions" value="624"/>
</dbReference>
<dbReference type="STRING" id="242507.A4R596"/>
<dbReference type="GeneID" id="2677315"/>
<dbReference type="KEGG" id="mgr:MGG_04160"/>
<dbReference type="VEuPathDB" id="FungiDB:MGG_04160"/>
<dbReference type="eggNOG" id="KOG3572">
    <property type="taxonomic scope" value="Eukaryota"/>
</dbReference>
<dbReference type="HOGENOM" id="CLU_000935_0_0_1"/>
<dbReference type="InParanoid" id="A4R596"/>
<dbReference type="OMA" id="SWMNATP"/>
<dbReference type="OrthoDB" id="39497at2759"/>
<dbReference type="Proteomes" id="UP000009058">
    <property type="component" value="Chromosome 6"/>
</dbReference>
<dbReference type="GO" id="GO:1990130">
    <property type="term" value="C:GATOR1 complex"/>
    <property type="evidence" value="ECO:0007669"/>
    <property type="project" value="TreeGrafter"/>
</dbReference>
<dbReference type="GO" id="GO:0005774">
    <property type="term" value="C:vacuolar membrane"/>
    <property type="evidence" value="ECO:0007669"/>
    <property type="project" value="UniProtKB-SubCell"/>
</dbReference>
<dbReference type="GO" id="GO:0005096">
    <property type="term" value="F:GTPase activator activity"/>
    <property type="evidence" value="ECO:0007669"/>
    <property type="project" value="InterPro"/>
</dbReference>
<dbReference type="GO" id="GO:0035556">
    <property type="term" value="P:intracellular signal transduction"/>
    <property type="evidence" value="ECO:0007669"/>
    <property type="project" value="InterPro"/>
</dbReference>
<dbReference type="GO" id="GO:1904262">
    <property type="term" value="P:negative regulation of TORC1 signaling"/>
    <property type="evidence" value="ECO:0007669"/>
    <property type="project" value="TreeGrafter"/>
</dbReference>
<dbReference type="GO" id="GO:0010508">
    <property type="term" value="P:positive regulation of autophagy"/>
    <property type="evidence" value="ECO:0007669"/>
    <property type="project" value="TreeGrafter"/>
</dbReference>
<dbReference type="CDD" id="cd04449">
    <property type="entry name" value="DEP_DEPDC5-like"/>
    <property type="match status" value="1"/>
</dbReference>
<dbReference type="Gene3D" id="1.10.10.10">
    <property type="entry name" value="Winged helix-like DNA-binding domain superfamily/Winged helix DNA-binding domain"/>
    <property type="match status" value="1"/>
</dbReference>
<dbReference type="InterPro" id="IPR000591">
    <property type="entry name" value="DEP_dom"/>
</dbReference>
<dbReference type="InterPro" id="IPR045838">
    <property type="entry name" value="DEPDC5_CTD"/>
</dbReference>
<dbReference type="InterPro" id="IPR027244">
    <property type="entry name" value="IML1"/>
</dbReference>
<dbReference type="InterPro" id="IPR048255">
    <property type="entry name" value="IML1_N"/>
</dbReference>
<dbReference type="InterPro" id="IPR036388">
    <property type="entry name" value="WH-like_DNA-bd_sf"/>
</dbReference>
<dbReference type="InterPro" id="IPR036390">
    <property type="entry name" value="WH_DNA-bd_sf"/>
</dbReference>
<dbReference type="PANTHER" id="PTHR13179">
    <property type="entry name" value="DEP DOMAIN CONTAINING PROTEIN 5"/>
    <property type="match status" value="1"/>
</dbReference>
<dbReference type="PANTHER" id="PTHR13179:SF8">
    <property type="entry name" value="GATOR COMPLEX PROTEIN DEPDC5"/>
    <property type="match status" value="1"/>
</dbReference>
<dbReference type="Pfam" id="PF00610">
    <property type="entry name" value="DEP"/>
    <property type="match status" value="1"/>
</dbReference>
<dbReference type="Pfam" id="PF19418">
    <property type="entry name" value="DEPDC5_CTD"/>
    <property type="match status" value="1"/>
</dbReference>
<dbReference type="Pfam" id="PF12257">
    <property type="entry name" value="IML1"/>
    <property type="match status" value="1"/>
</dbReference>
<dbReference type="SMART" id="SM00049">
    <property type="entry name" value="DEP"/>
    <property type="match status" value="1"/>
</dbReference>
<dbReference type="SUPFAM" id="SSF46785">
    <property type="entry name" value="Winged helix' DNA-binding domain"/>
    <property type="match status" value="1"/>
</dbReference>
<dbReference type="PROSITE" id="PS50186">
    <property type="entry name" value="DEP"/>
    <property type="match status" value="1"/>
</dbReference>
<reference key="1">
    <citation type="journal article" date="2005" name="Nature">
        <title>The genome sequence of the rice blast fungus Magnaporthe grisea.</title>
        <authorList>
            <person name="Dean R.A."/>
            <person name="Talbot N.J."/>
            <person name="Ebbole D.J."/>
            <person name="Farman M.L."/>
            <person name="Mitchell T.K."/>
            <person name="Orbach M.J."/>
            <person name="Thon M.R."/>
            <person name="Kulkarni R."/>
            <person name="Xu J.-R."/>
            <person name="Pan H."/>
            <person name="Read N.D."/>
            <person name="Lee Y.-H."/>
            <person name="Carbone I."/>
            <person name="Brown D."/>
            <person name="Oh Y.Y."/>
            <person name="Donofrio N."/>
            <person name="Jeong J.S."/>
            <person name="Soanes D.M."/>
            <person name="Djonovic S."/>
            <person name="Kolomiets E."/>
            <person name="Rehmeyer C."/>
            <person name="Li W."/>
            <person name="Harding M."/>
            <person name="Kim S."/>
            <person name="Lebrun M.-H."/>
            <person name="Bohnert H."/>
            <person name="Coughlan S."/>
            <person name="Butler J."/>
            <person name="Calvo S.E."/>
            <person name="Ma L.-J."/>
            <person name="Nicol R."/>
            <person name="Purcell S."/>
            <person name="Nusbaum C."/>
            <person name="Galagan J.E."/>
            <person name="Birren B.W."/>
        </authorList>
    </citation>
    <scope>NUCLEOTIDE SEQUENCE [LARGE SCALE GENOMIC DNA]</scope>
    <source>
        <strain>70-15 / ATCC MYA-4617 / FGSC 8958</strain>
    </source>
</reference>
<feature type="chain" id="PRO_0000301774" description="Vacuolar membrane-associated protein IML1">
    <location>
        <begin position="1"/>
        <end position="1874"/>
    </location>
</feature>
<feature type="domain" description="DEP" evidence="2">
    <location>
        <begin position="1304"/>
        <end position="1383"/>
    </location>
</feature>
<feature type="region of interest" description="Disordered" evidence="3">
    <location>
        <begin position="1"/>
        <end position="68"/>
    </location>
</feature>
<feature type="region of interest" description="Disordered" evidence="3">
    <location>
        <begin position="106"/>
        <end position="136"/>
    </location>
</feature>
<feature type="region of interest" description="Disordered" evidence="3">
    <location>
        <begin position="1363"/>
        <end position="1386"/>
    </location>
</feature>
<feature type="region of interest" description="Disordered" evidence="3">
    <location>
        <begin position="1671"/>
        <end position="1749"/>
    </location>
</feature>
<feature type="compositionally biased region" description="Basic and acidic residues" evidence="3">
    <location>
        <begin position="23"/>
        <end position="32"/>
    </location>
</feature>
<feature type="compositionally biased region" description="Basic residues" evidence="3">
    <location>
        <begin position="52"/>
        <end position="62"/>
    </location>
</feature>
<feature type="compositionally biased region" description="Basic and acidic residues" evidence="3">
    <location>
        <begin position="117"/>
        <end position="127"/>
    </location>
</feature>
<feature type="compositionally biased region" description="Basic and acidic residues" evidence="3">
    <location>
        <begin position="1671"/>
        <end position="1685"/>
    </location>
</feature>
<feature type="compositionally biased region" description="Gly residues" evidence="3">
    <location>
        <begin position="1691"/>
        <end position="1702"/>
    </location>
</feature>
<proteinExistence type="inferred from homology"/>
<comment type="subcellular location">
    <subcellularLocation>
        <location evidence="1">Vacuole membrane</location>
        <topology evidence="1">Peripheral membrane protein</topology>
    </subcellularLocation>
</comment>
<comment type="similarity">
    <text evidence="4">Belongs to the IML1 family.</text>
</comment>
<organism>
    <name type="scientific">Pyricularia oryzae (strain 70-15 / ATCC MYA-4617 / FGSC 8958)</name>
    <name type="common">Rice blast fungus</name>
    <name type="synonym">Magnaporthe oryzae</name>
    <dbReference type="NCBI Taxonomy" id="242507"/>
    <lineage>
        <taxon>Eukaryota</taxon>
        <taxon>Fungi</taxon>
        <taxon>Dikarya</taxon>
        <taxon>Ascomycota</taxon>
        <taxon>Pezizomycotina</taxon>
        <taxon>Sordariomycetes</taxon>
        <taxon>Sordariomycetidae</taxon>
        <taxon>Magnaporthales</taxon>
        <taxon>Pyriculariaceae</taxon>
        <taxon>Pyricularia</taxon>
    </lineage>
</organism>